<keyword id="KW-1185">Reference proteome</keyword>
<keyword id="KW-0687">Ribonucleoprotein</keyword>
<keyword id="KW-0689">Ribosomal protein</keyword>
<keyword id="KW-0694">RNA-binding</keyword>
<keyword id="KW-0699">rRNA-binding</keyword>
<proteinExistence type="inferred from homology"/>
<reference key="1">
    <citation type="journal article" date="2016" name="Genome Announc.">
        <title>Complete genome sequence of Alkaliphilus metalliredigens strain QYMF, an alkaliphilic and metal-reducing bacterium isolated from borax-contaminated leachate ponds.</title>
        <authorList>
            <person name="Hwang C."/>
            <person name="Copeland A."/>
            <person name="Lucas S."/>
            <person name="Lapidus A."/>
            <person name="Barry K."/>
            <person name="Detter J.C."/>
            <person name="Glavina Del Rio T."/>
            <person name="Hammon N."/>
            <person name="Israni S."/>
            <person name="Dalin E."/>
            <person name="Tice H."/>
            <person name="Pitluck S."/>
            <person name="Chertkov O."/>
            <person name="Brettin T."/>
            <person name="Bruce D."/>
            <person name="Han C."/>
            <person name="Schmutz J."/>
            <person name="Larimer F."/>
            <person name="Land M.L."/>
            <person name="Hauser L."/>
            <person name="Kyrpides N."/>
            <person name="Mikhailova N."/>
            <person name="Ye Q."/>
            <person name="Zhou J."/>
            <person name="Richardson P."/>
            <person name="Fields M.W."/>
        </authorList>
    </citation>
    <scope>NUCLEOTIDE SEQUENCE [LARGE SCALE GENOMIC DNA]</scope>
    <source>
        <strain>QYMF</strain>
    </source>
</reference>
<sequence length="169" mass="18000">MQFNKRIDANQLDMKEQVVDIRRVTKVVKGGRNFRFAALVVVGDENGHVGVGTGKAMEIPDAIRKGIQAAKKNLLLVPTVGTTVPHEVIGHFGAGNVLIMPAKEGTGIIAGGPVRAVLELAGIKDVRAKSLGTNNSRNMVSATMDGLRQLKRAEDVAKLRGKSVEELLG</sequence>
<gene>
    <name evidence="1" type="primary">rpsE</name>
    <name type="ordered locus">Amet_4461</name>
</gene>
<organism>
    <name type="scientific">Alkaliphilus metalliredigens (strain QYMF)</name>
    <dbReference type="NCBI Taxonomy" id="293826"/>
    <lineage>
        <taxon>Bacteria</taxon>
        <taxon>Bacillati</taxon>
        <taxon>Bacillota</taxon>
        <taxon>Clostridia</taxon>
        <taxon>Peptostreptococcales</taxon>
        <taxon>Natronincolaceae</taxon>
        <taxon>Alkaliphilus</taxon>
    </lineage>
</organism>
<evidence type="ECO:0000255" key="1">
    <source>
        <dbReference type="HAMAP-Rule" id="MF_01307"/>
    </source>
</evidence>
<evidence type="ECO:0000305" key="2"/>
<comment type="function">
    <text evidence="1">With S4 and S12 plays an important role in translational accuracy.</text>
</comment>
<comment type="function">
    <text evidence="1">Located at the back of the 30S subunit body where it stabilizes the conformation of the head with respect to the body.</text>
</comment>
<comment type="subunit">
    <text evidence="1">Part of the 30S ribosomal subunit. Contacts proteins S4 and S8.</text>
</comment>
<comment type="domain">
    <text>The N-terminal domain interacts with the head of the 30S subunit; the C-terminal domain interacts with the body and contacts protein S4. The interaction surface between S4 and S5 is involved in control of translational fidelity.</text>
</comment>
<comment type="similarity">
    <text evidence="1">Belongs to the universal ribosomal protein uS5 family.</text>
</comment>
<dbReference type="EMBL" id="CP000724">
    <property type="protein sequence ID" value="ABR50533.1"/>
    <property type="molecule type" value="Genomic_DNA"/>
</dbReference>
<dbReference type="RefSeq" id="WP_012065424.1">
    <property type="nucleotide sequence ID" value="NC_009633.1"/>
</dbReference>
<dbReference type="SMR" id="A6TWG5"/>
<dbReference type="STRING" id="293826.Amet_4461"/>
<dbReference type="KEGG" id="amt:Amet_4461"/>
<dbReference type="eggNOG" id="COG0098">
    <property type="taxonomic scope" value="Bacteria"/>
</dbReference>
<dbReference type="HOGENOM" id="CLU_065898_2_2_9"/>
<dbReference type="OrthoDB" id="9809045at2"/>
<dbReference type="Proteomes" id="UP000001572">
    <property type="component" value="Chromosome"/>
</dbReference>
<dbReference type="GO" id="GO:0015935">
    <property type="term" value="C:small ribosomal subunit"/>
    <property type="evidence" value="ECO:0007669"/>
    <property type="project" value="InterPro"/>
</dbReference>
<dbReference type="GO" id="GO:0019843">
    <property type="term" value="F:rRNA binding"/>
    <property type="evidence" value="ECO:0007669"/>
    <property type="project" value="UniProtKB-UniRule"/>
</dbReference>
<dbReference type="GO" id="GO:0003735">
    <property type="term" value="F:structural constituent of ribosome"/>
    <property type="evidence" value="ECO:0007669"/>
    <property type="project" value="InterPro"/>
</dbReference>
<dbReference type="GO" id="GO:0006412">
    <property type="term" value="P:translation"/>
    <property type="evidence" value="ECO:0007669"/>
    <property type="project" value="UniProtKB-UniRule"/>
</dbReference>
<dbReference type="FunFam" id="3.30.160.20:FF:000001">
    <property type="entry name" value="30S ribosomal protein S5"/>
    <property type="match status" value="1"/>
</dbReference>
<dbReference type="FunFam" id="3.30.230.10:FF:000002">
    <property type="entry name" value="30S ribosomal protein S5"/>
    <property type="match status" value="1"/>
</dbReference>
<dbReference type="Gene3D" id="3.30.160.20">
    <property type="match status" value="1"/>
</dbReference>
<dbReference type="Gene3D" id="3.30.230.10">
    <property type="match status" value="1"/>
</dbReference>
<dbReference type="HAMAP" id="MF_01307_B">
    <property type="entry name" value="Ribosomal_uS5_B"/>
    <property type="match status" value="1"/>
</dbReference>
<dbReference type="InterPro" id="IPR020568">
    <property type="entry name" value="Ribosomal_Su5_D2-typ_SF"/>
</dbReference>
<dbReference type="InterPro" id="IPR000851">
    <property type="entry name" value="Ribosomal_uS5"/>
</dbReference>
<dbReference type="InterPro" id="IPR005712">
    <property type="entry name" value="Ribosomal_uS5_bac-type"/>
</dbReference>
<dbReference type="InterPro" id="IPR005324">
    <property type="entry name" value="Ribosomal_uS5_C"/>
</dbReference>
<dbReference type="InterPro" id="IPR013810">
    <property type="entry name" value="Ribosomal_uS5_N"/>
</dbReference>
<dbReference type="InterPro" id="IPR018192">
    <property type="entry name" value="Ribosomal_uS5_N_CS"/>
</dbReference>
<dbReference type="InterPro" id="IPR014721">
    <property type="entry name" value="Ribsml_uS5_D2-typ_fold_subgr"/>
</dbReference>
<dbReference type="NCBIfam" id="TIGR01021">
    <property type="entry name" value="rpsE_bact"/>
    <property type="match status" value="1"/>
</dbReference>
<dbReference type="PANTHER" id="PTHR48277">
    <property type="entry name" value="MITOCHONDRIAL RIBOSOMAL PROTEIN S5"/>
    <property type="match status" value="1"/>
</dbReference>
<dbReference type="PANTHER" id="PTHR48277:SF1">
    <property type="entry name" value="MITOCHONDRIAL RIBOSOMAL PROTEIN S5"/>
    <property type="match status" value="1"/>
</dbReference>
<dbReference type="Pfam" id="PF00333">
    <property type="entry name" value="Ribosomal_S5"/>
    <property type="match status" value="1"/>
</dbReference>
<dbReference type="Pfam" id="PF03719">
    <property type="entry name" value="Ribosomal_S5_C"/>
    <property type="match status" value="1"/>
</dbReference>
<dbReference type="SUPFAM" id="SSF54768">
    <property type="entry name" value="dsRNA-binding domain-like"/>
    <property type="match status" value="1"/>
</dbReference>
<dbReference type="SUPFAM" id="SSF54211">
    <property type="entry name" value="Ribosomal protein S5 domain 2-like"/>
    <property type="match status" value="1"/>
</dbReference>
<dbReference type="PROSITE" id="PS00585">
    <property type="entry name" value="RIBOSOMAL_S5"/>
    <property type="match status" value="1"/>
</dbReference>
<dbReference type="PROSITE" id="PS50881">
    <property type="entry name" value="S5_DSRBD"/>
    <property type="match status" value="1"/>
</dbReference>
<accession>A6TWG5</accession>
<protein>
    <recommendedName>
        <fullName evidence="1">Small ribosomal subunit protein uS5</fullName>
    </recommendedName>
    <alternativeName>
        <fullName evidence="2">30S ribosomal protein S5</fullName>
    </alternativeName>
</protein>
<name>RS5_ALKMQ</name>
<feature type="chain" id="PRO_0000323060" description="Small ribosomal subunit protein uS5">
    <location>
        <begin position="1"/>
        <end position="169"/>
    </location>
</feature>
<feature type="domain" description="S5 DRBM" evidence="1">
    <location>
        <begin position="14"/>
        <end position="77"/>
    </location>
</feature>